<comment type="function">
    <text>The proteasome is a multicatalytic proteinase complex which is characterized by its ability to cleave peptides with Arg, Phe, Tyr, Leu, and Glu adjacent to the leaving group at neutral or slightly basic pH. The proteasome has an ATP-dependent proteolytic activity.</text>
</comment>
<comment type="subunit">
    <text evidence="1">The 26S proteasome consists of a 20S proteasome core and two 19S regulatory subunits. The 20S proteasome core is composed of 28 subunits that are arranged in four stacked rings, resulting in a barrel-shaped structure. The two end rings are each formed by seven alpha subunits, and the two central rings are each formed by seven beta subunits. The catalytic chamber with the active sites is on the inside of the barrel (By similarity).</text>
</comment>
<comment type="subcellular location">
    <subcellularLocation>
        <location evidence="1">Cytoplasm</location>
    </subcellularLocation>
    <subcellularLocation>
        <location evidence="1">Nucleus</location>
    </subcellularLocation>
</comment>
<comment type="tissue specificity">
    <text>Testis specific.</text>
</comment>
<comment type="similarity">
    <text evidence="2">Belongs to the peptidase T1A family.</text>
</comment>
<reference key="1">
    <citation type="journal article" date="1998" name="Gene">
        <title>Evolutionary conservation of a testes-specific proteasome subunit gene in Drosophila.</title>
        <authorList>
            <person name="Belote J.M."/>
            <person name="Miller M."/>
            <person name="Smyth K.A."/>
        </authorList>
    </citation>
    <scope>NUCLEOTIDE SEQUENCE [GENOMIC DNA]</scope>
    <source>
        <tissue>Testis</tissue>
    </source>
</reference>
<organism>
    <name type="scientific">Drosophila virilis</name>
    <name type="common">Fruit fly</name>
    <dbReference type="NCBI Taxonomy" id="7244"/>
    <lineage>
        <taxon>Eukaryota</taxon>
        <taxon>Metazoa</taxon>
        <taxon>Ecdysozoa</taxon>
        <taxon>Arthropoda</taxon>
        <taxon>Hexapoda</taxon>
        <taxon>Insecta</taxon>
        <taxon>Pterygota</taxon>
        <taxon>Neoptera</taxon>
        <taxon>Endopterygota</taxon>
        <taxon>Diptera</taxon>
        <taxon>Brachycera</taxon>
        <taxon>Muscomorpha</taxon>
        <taxon>Ephydroidea</taxon>
        <taxon>Drosophilidae</taxon>
        <taxon>Drosophila</taxon>
    </lineage>
</organism>
<feature type="chain" id="PRO_0000124157" description="Proteasome subunit alpha type-7-1B">
    <location>
        <begin position="1"/>
        <end position="245"/>
    </location>
</feature>
<sequence>MSRFDESVNIYSDGHLLQVEYAQEAVRKGSTVGLRTKECVVLGVEKRAIDSLQIERTSRKIKKIDQHMAMTFAGLTADARVLVSRAQVEAQSHRLNFDRPASVEYITRYLARLKQTYTQSVARRPFGVSCLIGGFDEDGRPRLFQTDPSGIYYEWSANTTGRLGQTVNEYLEKNTAAISRTPDAASAMKHVVRALFTATSLDPASIELAVLRYWQPIEMVKPETLEYLLGVIKQEAVEEALTKAP</sequence>
<dbReference type="EMBL" id="AF017650">
    <property type="protein sequence ID" value="AAC34197.1"/>
    <property type="molecule type" value="Genomic_DNA"/>
</dbReference>
<dbReference type="SMR" id="O16812"/>
<dbReference type="eggNOG" id="KOG0183">
    <property type="taxonomic scope" value="Eukaryota"/>
</dbReference>
<dbReference type="OrthoDB" id="431557at2759"/>
<dbReference type="GO" id="GO:0005737">
    <property type="term" value="C:cytoplasm"/>
    <property type="evidence" value="ECO:0007669"/>
    <property type="project" value="UniProtKB-SubCell"/>
</dbReference>
<dbReference type="GO" id="GO:0005634">
    <property type="term" value="C:nucleus"/>
    <property type="evidence" value="ECO:0007669"/>
    <property type="project" value="UniProtKB-SubCell"/>
</dbReference>
<dbReference type="GO" id="GO:0019773">
    <property type="term" value="C:proteasome core complex, alpha-subunit complex"/>
    <property type="evidence" value="ECO:0000250"/>
    <property type="project" value="UniProtKB"/>
</dbReference>
<dbReference type="GO" id="GO:0006511">
    <property type="term" value="P:ubiquitin-dependent protein catabolic process"/>
    <property type="evidence" value="ECO:0007669"/>
    <property type="project" value="InterPro"/>
</dbReference>
<dbReference type="FunFam" id="3.60.20.10:FF:000004">
    <property type="entry name" value="Proteasome subunit alpha type-4"/>
    <property type="match status" value="1"/>
</dbReference>
<dbReference type="Gene3D" id="3.60.20.10">
    <property type="entry name" value="Glutamine Phosphoribosylpyrophosphate, subunit 1, domain 1"/>
    <property type="match status" value="1"/>
</dbReference>
<dbReference type="InterPro" id="IPR029055">
    <property type="entry name" value="Ntn_hydrolases_N"/>
</dbReference>
<dbReference type="InterPro" id="IPR050115">
    <property type="entry name" value="Proteasome_alpha"/>
</dbReference>
<dbReference type="InterPro" id="IPR023332">
    <property type="entry name" value="Proteasome_alpha-type"/>
</dbReference>
<dbReference type="InterPro" id="IPR000426">
    <property type="entry name" value="Proteasome_asu_N"/>
</dbReference>
<dbReference type="InterPro" id="IPR001353">
    <property type="entry name" value="Proteasome_sua/b"/>
</dbReference>
<dbReference type="PANTHER" id="PTHR11599">
    <property type="entry name" value="PROTEASOME SUBUNIT ALPHA/BETA"/>
    <property type="match status" value="1"/>
</dbReference>
<dbReference type="Pfam" id="PF00227">
    <property type="entry name" value="Proteasome"/>
    <property type="match status" value="1"/>
</dbReference>
<dbReference type="SMART" id="SM00948">
    <property type="entry name" value="Proteasome_A_N"/>
    <property type="match status" value="1"/>
</dbReference>
<dbReference type="SUPFAM" id="SSF56235">
    <property type="entry name" value="N-terminal nucleophile aminohydrolases (Ntn hydrolases)"/>
    <property type="match status" value="1"/>
</dbReference>
<dbReference type="PROSITE" id="PS00388">
    <property type="entry name" value="PROTEASOME_ALPHA_1"/>
    <property type="match status" value="1"/>
</dbReference>
<dbReference type="PROSITE" id="PS51475">
    <property type="entry name" value="PROTEASOME_ALPHA_2"/>
    <property type="match status" value="1"/>
</dbReference>
<gene>
    <name type="primary">Pros28.1B</name>
</gene>
<accession>O16812</accession>
<keyword id="KW-0963">Cytoplasm</keyword>
<keyword id="KW-0539">Nucleus</keyword>
<keyword id="KW-0647">Proteasome</keyword>
<protein>
    <recommendedName>
        <fullName>Proteasome subunit alpha type-7-1B</fullName>
    </recommendedName>
    <alternativeName>
        <fullName>Testis-specific proteasome 28 kDa subunit 1B</fullName>
    </alternativeName>
</protein>
<evidence type="ECO:0000250" key="1"/>
<evidence type="ECO:0000255" key="2">
    <source>
        <dbReference type="PROSITE-ProRule" id="PRU00808"/>
    </source>
</evidence>
<proteinExistence type="evidence at transcript level"/>
<name>PSA73_DROVI</name>